<accession>Q8TVJ1</accession>
<feature type="chain" id="PRO_0000322075" description="Riboflavin kinase">
    <location>
        <begin position="1"/>
        <end position="147"/>
    </location>
</feature>
<feature type="binding site" evidence="1">
    <location>
        <begin position="15"/>
        <end position="20"/>
    </location>
    <ligand>
        <name>CDP</name>
        <dbReference type="ChEBI" id="CHEBI:58069"/>
    </ligand>
</feature>
<feature type="binding site" evidence="1">
    <location>
        <position position="44"/>
    </location>
    <ligand>
        <name>Mg(2+)</name>
        <dbReference type="ChEBI" id="CHEBI:18420"/>
    </ligand>
</feature>
<feature type="binding site" evidence="1">
    <location>
        <position position="46"/>
    </location>
    <ligand>
        <name>Mg(2+)</name>
        <dbReference type="ChEBI" id="CHEBI:18420"/>
    </ligand>
</feature>
<feature type="binding site" evidence="1">
    <location>
        <position position="97"/>
    </location>
    <ligand>
        <name>FMN</name>
        <dbReference type="ChEBI" id="CHEBI:58210"/>
    </ligand>
</feature>
<feature type="binding site" evidence="1">
    <location>
        <position position="104"/>
    </location>
    <ligand>
        <name>FMN</name>
        <dbReference type="ChEBI" id="CHEBI:58210"/>
    </ligand>
</feature>
<feature type="binding site" evidence="1">
    <location>
        <begin position="109"/>
        <end position="112"/>
    </location>
    <ligand>
        <name>CDP</name>
        <dbReference type="ChEBI" id="CHEBI:58069"/>
    </ligand>
</feature>
<comment type="function">
    <text evidence="1">Catalyzes the CTP-dependent phosphorylation of riboflavin (vitamin B2) to form flavin mononucleotide (FMN).</text>
</comment>
<comment type="catalytic activity">
    <reaction evidence="1">
        <text>riboflavin + CTP = CDP + FMN + H(+)</text>
        <dbReference type="Rhea" id="RHEA:25021"/>
        <dbReference type="ChEBI" id="CHEBI:15378"/>
        <dbReference type="ChEBI" id="CHEBI:37563"/>
        <dbReference type="ChEBI" id="CHEBI:57986"/>
        <dbReference type="ChEBI" id="CHEBI:58069"/>
        <dbReference type="ChEBI" id="CHEBI:58210"/>
        <dbReference type="EC" id="2.7.1.161"/>
    </reaction>
</comment>
<comment type="cofactor">
    <cofactor evidence="1">
        <name>Mg(2+)</name>
        <dbReference type="ChEBI" id="CHEBI:18420"/>
    </cofactor>
    <text evidence="1">Binds 1 Mg(2+) ion per subunit.</text>
</comment>
<comment type="pathway">
    <text evidence="1">Cofactor biosynthesis; FMN biosynthesis; FMN from riboflavin (CTP route): step 1/1.</text>
</comment>
<comment type="similarity">
    <text evidence="1">Belongs to the archaeal riboflavin kinase family.</text>
</comment>
<protein>
    <recommendedName>
        <fullName evidence="1">Riboflavin kinase</fullName>
        <shortName evidence="1">RFK</shortName>
        <ecNumber evidence="1">2.7.1.161</ecNumber>
    </recommendedName>
    <alternativeName>
        <fullName evidence="1">CTP-dependent riboflavin kinase</fullName>
    </alternativeName>
    <alternativeName>
        <fullName evidence="1">CTP:riboflavin 5'-phosphotransferase</fullName>
    </alternativeName>
    <alternativeName>
        <fullName evidence="1">Flavokinase</fullName>
    </alternativeName>
</protein>
<sequence length="147" mass="16880">MFTGPIVAVGEYVEGLGEGRRYVSIPYYRREIERVIGARPFPGTFNVRVEREERESLRELASSYGYRIEPHGEYGGAWLYPCLVNGRPAWLVFPDLTEHRDQVELISETELRRELNVIHGDMVKIEVWGPSTWKLARRLTCGPSGGR</sequence>
<keyword id="KW-0285">Flavoprotein</keyword>
<keyword id="KW-0288">FMN</keyword>
<keyword id="KW-0418">Kinase</keyword>
<keyword id="KW-0460">Magnesium</keyword>
<keyword id="KW-0479">Metal-binding</keyword>
<keyword id="KW-0547">Nucleotide-binding</keyword>
<keyword id="KW-1185">Reference proteome</keyword>
<keyword id="KW-0808">Transferase</keyword>
<reference key="1">
    <citation type="journal article" date="2002" name="Proc. Natl. Acad. Sci. U.S.A.">
        <title>The complete genome of hyperthermophile Methanopyrus kandleri AV19 and monophyly of archaeal methanogens.</title>
        <authorList>
            <person name="Slesarev A.I."/>
            <person name="Mezhevaya K.V."/>
            <person name="Makarova K.S."/>
            <person name="Polushin N.N."/>
            <person name="Shcherbinina O.V."/>
            <person name="Shakhova V.V."/>
            <person name="Belova G.I."/>
            <person name="Aravind L."/>
            <person name="Natale D.A."/>
            <person name="Rogozin I.B."/>
            <person name="Tatusov R.L."/>
            <person name="Wolf Y.I."/>
            <person name="Stetter K.O."/>
            <person name="Malykh A.G."/>
            <person name="Koonin E.V."/>
            <person name="Kozyavkin S.A."/>
        </authorList>
    </citation>
    <scope>NUCLEOTIDE SEQUENCE [LARGE SCALE GENOMIC DNA]</scope>
    <source>
        <strain>AV19 / DSM 6324 / JCM 9639 / NBRC 100938</strain>
    </source>
</reference>
<proteinExistence type="inferred from homology"/>
<gene>
    <name evidence="1" type="primary">ribK</name>
    <name type="ordered locus">MK1398</name>
</gene>
<dbReference type="EC" id="2.7.1.161" evidence="1"/>
<dbReference type="EMBL" id="AE009439">
    <property type="protein sequence ID" value="AAM02611.1"/>
    <property type="molecule type" value="Genomic_DNA"/>
</dbReference>
<dbReference type="SMR" id="Q8TVJ1"/>
<dbReference type="FunCoup" id="Q8TVJ1">
    <property type="interactions" value="17"/>
</dbReference>
<dbReference type="STRING" id="190192.MK1398"/>
<dbReference type="PaxDb" id="190192-MK1398"/>
<dbReference type="EnsemblBacteria" id="AAM02611">
    <property type="protein sequence ID" value="AAM02611"/>
    <property type="gene ID" value="MK1398"/>
</dbReference>
<dbReference type="KEGG" id="mka:MK1398"/>
<dbReference type="HOGENOM" id="CLU_140165_0_0_2"/>
<dbReference type="InParanoid" id="Q8TVJ1"/>
<dbReference type="UniPathway" id="UPA00276">
    <property type="reaction ID" value="UER00929"/>
</dbReference>
<dbReference type="Proteomes" id="UP000001826">
    <property type="component" value="Chromosome"/>
</dbReference>
<dbReference type="GO" id="GO:0000287">
    <property type="term" value="F:magnesium ion binding"/>
    <property type="evidence" value="ECO:0007669"/>
    <property type="project" value="UniProtKB-UniRule"/>
</dbReference>
<dbReference type="GO" id="GO:0000166">
    <property type="term" value="F:nucleotide binding"/>
    <property type="evidence" value="ECO:0007669"/>
    <property type="project" value="UniProtKB-UniRule"/>
</dbReference>
<dbReference type="GO" id="GO:0008531">
    <property type="term" value="F:riboflavin kinase activity"/>
    <property type="evidence" value="ECO:0007669"/>
    <property type="project" value="InterPro"/>
</dbReference>
<dbReference type="GO" id="GO:0009398">
    <property type="term" value="P:FMN biosynthetic process"/>
    <property type="evidence" value="ECO:0007669"/>
    <property type="project" value="UniProtKB-UniRule"/>
</dbReference>
<dbReference type="GO" id="GO:0009231">
    <property type="term" value="P:riboflavin biosynthetic process"/>
    <property type="evidence" value="ECO:0007669"/>
    <property type="project" value="InterPro"/>
</dbReference>
<dbReference type="Gene3D" id="2.40.30.30">
    <property type="entry name" value="Riboflavin kinase-like"/>
    <property type="match status" value="1"/>
</dbReference>
<dbReference type="HAMAP" id="MF_01285">
    <property type="entry name" value="Riboflavin_kinase"/>
    <property type="match status" value="1"/>
</dbReference>
<dbReference type="InterPro" id="IPR039063">
    <property type="entry name" value="RibK_CTP-dep"/>
</dbReference>
<dbReference type="InterPro" id="IPR023470">
    <property type="entry name" value="Riboflavin_kinase_archaeal"/>
</dbReference>
<dbReference type="InterPro" id="IPR023602">
    <property type="entry name" value="Riboflavin_kinase_CTP-dep"/>
</dbReference>
<dbReference type="InterPro" id="IPR023465">
    <property type="entry name" value="Riboflavin_kinase_dom_sf"/>
</dbReference>
<dbReference type="PANTHER" id="PTHR40706">
    <property type="entry name" value="RIBOFLAVIN KINASE"/>
    <property type="match status" value="1"/>
</dbReference>
<dbReference type="PANTHER" id="PTHR40706:SF1">
    <property type="entry name" value="RIBOFLAVIN KINASE"/>
    <property type="match status" value="1"/>
</dbReference>
<dbReference type="Pfam" id="PF01982">
    <property type="entry name" value="CTP-dep_RFKase"/>
    <property type="match status" value="1"/>
</dbReference>
<dbReference type="SUPFAM" id="SSF82114">
    <property type="entry name" value="Riboflavin kinase-like"/>
    <property type="match status" value="1"/>
</dbReference>
<name>RIFK_METKA</name>
<organism>
    <name type="scientific">Methanopyrus kandleri (strain AV19 / DSM 6324 / JCM 9639 / NBRC 100938)</name>
    <dbReference type="NCBI Taxonomy" id="190192"/>
    <lineage>
        <taxon>Archaea</taxon>
        <taxon>Methanobacteriati</taxon>
        <taxon>Methanobacteriota</taxon>
        <taxon>Methanomada group</taxon>
        <taxon>Methanopyri</taxon>
        <taxon>Methanopyrales</taxon>
        <taxon>Methanopyraceae</taxon>
        <taxon>Methanopyrus</taxon>
    </lineage>
</organism>
<evidence type="ECO:0000255" key="1">
    <source>
        <dbReference type="HAMAP-Rule" id="MF_01285"/>
    </source>
</evidence>